<evidence type="ECO:0000255" key="1"/>
<evidence type="ECO:0000255" key="2">
    <source>
        <dbReference type="PROSITE-ProRule" id="PRU00163"/>
    </source>
</evidence>
<evidence type="ECO:0000256" key="3">
    <source>
        <dbReference type="SAM" id="MobiDB-lite"/>
    </source>
</evidence>
<evidence type="ECO:0000305" key="4"/>
<sequence length="907" mass="101917">MDVQAEDLFRDVESDAFVNESHGGTGFQQNFSAWPGAFQVAWPLTNHQDLASETQDNGNKSGGDEIDVSLCDSQQQGRSRTSSLVNGLLTELYDTYRGGAGCYYFRQQDSVDSSTEASGSDAFLSRSNPESGFLQELSERQSSRHQMLYLKQKDCSELKAIKDELNRRIAIQSAKLLRQVKQKDRLQHKVQKNCDIVTACLQAVSQKRRVDTKLKFTLEPSLGQNGFQQWYDALKAVARLPTGIPKEWRKRVWLTLADHYLHSISIDWDKTMRFTFNDRSNPDDDSMGIQIVKDLHRTGCSSYCGQEAEQDRVVLKRVLLAYARWNKTIGYCQGFNILAALILEVMEGNEGDALKVMIYLIDKVLPDSYFANNLRALSVDMAVFRDLVRMKLPELSQHLDVLQRTANKESGGGYEPPLTNVFTMQWFLTLFATCLPNHTVLKIWDSVFFEGSEILLRVSLAIWAKLGEQIECCQNSDDFYSTMGRLTQEMLEDSLIDSNELMQTVYSMAQFPFPQLAELREKYTYNITPFPAPVKSASFSGRTSKMRDSDEENEIDEDDVNANAVGCLGPFSGFLAPELQKYQKQIKDQKEEQSLKASNIAELSPGAIDSCRSEYHAVFNSMMMERMTTDINALKQQYSRIKKRQLQQINQVYIAADKGPVSCILPSQVNNSPVINHLLLGKKLKQVNRSKNALHLPASKSSLLANEETKAKQNSPWRTHIRVHRKNIARAKGELGHGDTIGLIDEQNEVPKDQPDTSKETEETAQPPCSSAGEETSLDRTVMKVDGRSPEPVYQDENANVTVVQSKLEALELSPDAETEVSLEMSQTFQESQSDSHSSSSESESFKKSPKVQVFSPFPSVKPLKKSATARNLGLYGPNSRTPSVNFPHMSKTFNKAANGTTGSKKR</sequence>
<name>TBC30_XENTR</name>
<keyword id="KW-0175">Coiled coil</keyword>
<keyword id="KW-1185">Reference proteome</keyword>
<feature type="chain" id="PRO_0000320654" description="TBC1 domain family member 30">
    <location>
        <begin position="1"/>
        <end position="907"/>
    </location>
</feature>
<feature type="domain" description="Rab-GAP TBC" evidence="2">
    <location>
        <begin position="243"/>
        <end position="451"/>
    </location>
</feature>
<feature type="region of interest" description="Disordered" evidence="3">
    <location>
        <begin position="51"/>
        <end position="74"/>
    </location>
</feature>
<feature type="region of interest" description="Disordered" evidence="3">
    <location>
        <begin position="731"/>
        <end position="781"/>
    </location>
</feature>
<feature type="region of interest" description="Disordered" evidence="3">
    <location>
        <begin position="812"/>
        <end position="859"/>
    </location>
</feature>
<feature type="region of interest" description="Disordered" evidence="3">
    <location>
        <begin position="872"/>
        <end position="907"/>
    </location>
</feature>
<feature type="coiled-coil region" evidence="1">
    <location>
        <begin position="583"/>
        <end position="645"/>
    </location>
</feature>
<feature type="compositionally biased region" description="Basic and acidic residues" evidence="3">
    <location>
        <begin position="749"/>
        <end position="762"/>
    </location>
</feature>
<feature type="compositionally biased region" description="Low complexity" evidence="3">
    <location>
        <begin position="831"/>
        <end position="843"/>
    </location>
</feature>
<feature type="compositionally biased region" description="Polar residues" evidence="3">
    <location>
        <begin position="892"/>
        <end position="907"/>
    </location>
</feature>
<gene>
    <name type="primary">tbc1d30</name>
    <name type="ORF">TEgg107a03.1</name>
</gene>
<organism>
    <name type="scientific">Xenopus tropicalis</name>
    <name type="common">Western clawed frog</name>
    <name type="synonym">Silurana tropicalis</name>
    <dbReference type="NCBI Taxonomy" id="8364"/>
    <lineage>
        <taxon>Eukaryota</taxon>
        <taxon>Metazoa</taxon>
        <taxon>Chordata</taxon>
        <taxon>Craniata</taxon>
        <taxon>Vertebrata</taxon>
        <taxon>Euteleostomi</taxon>
        <taxon>Amphibia</taxon>
        <taxon>Batrachia</taxon>
        <taxon>Anura</taxon>
        <taxon>Pipoidea</taxon>
        <taxon>Pipidae</taxon>
        <taxon>Xenopodinae</taxon>
        <taxon>Xenopus</taxon>
        <taxon>Silurana</taxon>
    </lineage>
</organism>
<dbReference type="EMBL" id="CR942478">
    <property type="protein sequence ID" value="CAJ81696.1"/>
    <property type="molecule type" value="mRNA"/>
</dbReference>
<dbReference type="RefSeq" id="NP_001039209.1">
    <property type="nucleotide sequence ID" value="NM_001045744.1"/>
</dbReference>
<dbReference type="SMR" id="Q28C33"/>
<dbReference type="FunCoup" id="Q28C33">
    <property type="interactions" value="339"/>
</dbReference>
<dbReference type="STRING" id="8364.ENSXETP00000012524"/>
<dbReference type="PaxDb" id="8364-ENSXETP00000060842"/>
<dbReference type="GeneID" id="734068"/>
<dbReference type="KEGG" id="xtr:734068"/>
<dbReference type="AGR" id="Xenbase:XB-GENE-5823666"/>
<dbReference type="CTD" id="23329"/>
<dbReference type="Xenbase" id="XB-GENE-5823666">
    <property type="gene designation" value="tbc1d30"/>
</dbReference>
<dbReference type="eggNOG" id="KOG2058">
    <property type="taxonomic scope" value="Eukaryota"/>
</dbReference>
<dbReference type="InParanoid" id="Q28C33"/>
<dbReference type="OrthoDB" id="289721at2759"/>
<dbReference type="Proteomes" id="UP000008143">
    <property type="component" value="Chromosome 3"/>
</dbReference>
<dbReference type="FunFam" id="1.10.472.80:FF:000011">
    <property type="entry name" value="TBC1 domain family member 30"/>
    <property type="match status" value="1"/>
</dbReference>
<dbReference type="FunFam" id="1.10.8.270:FF:000009">
    <property type="entry name" value="TBC1 domain family member 30"/>
    <property type="match status" value="1"/>
</dbReference>
<dbReference type="Gene3D" id="1.10.8.270">
    <property type="entry name" value="putative rabgap domain of human tbc1 domain family member 14 like domains"/>
    <property type="match status" value="1"/>
</dbReference>
<dbReference type="Gene3D" id="1.10.472.80">
    <property type="entry name" value="Ypt/Rab-GAP domain of gyp1p, domain 3"/>
    <property type="match status" value="1"/>
</dbReference>
<dbReference type="InterPro" id="IPR000195">
    <property type="entry name" value="Rab-GAP-TBC_dom"/>
</dbReference>
<dbReference type="InterPro" id="IPR035969">
    <property type="entry name" value="Rab-GAP_TBC_sf"/>
</dbReference>
<dbReference type="InterPro" id="IPR032738">
    <property type="entry name" value="Tbc1d30_C"/>
</dbReference>
<dbReference type="PANTHER" id="PTHR13399:SF4">
    <property type="entry name" value="TBC1 DOMAIN FAMILY MEMBER 30"/>
    <property type="match status" value="1"/>
</dbReference>
<dbReference type="PANTHER" id="PTHR13399">
    <property type="entry name" value="TRANSLOCON-ASSOCIATED PROTEIN TRAP , GAMMA SUBUNIT"/>
    <property type="match status" value="1"/>
</dbReference>
<dbReference type="Pfam" id="PF15733">
    <property type="entry name" value="DUF4682"/>
    <property type="match status" value="1"/>
</dbReference>
<dbReference type="Pfam" id="PF00566">
    <property type="entry name" value="RabGAP-TBC"/>
    <property type="match status" value="1"/>
</dbReference>
<dbReference type="SMART" id="SM00164">
    <property type="entry name" value="TBC"/>
    <property type="match status" value="1"/>
</dbReference>
<dbReference type="SUPFAM" id="SSF47923">
    <property type="entry name" value="Ypt/Rab-GAP domain of gyp1p"/>
    <property type="match status" value="2"/>
</dbReference>
<dbReference type="PROSITE" id="PS00018">
    <property type="entry name" value="EF_HAND_1"/>
    <property type="match status" value="1"/>
</dbReference>
<dbReference type="PROSITE" id="PS50086">
    <property type="entry name" value="TBC_RABGAP"/>
    <property type="match status" value="1"/>
</dbReference>
<accession>Q28C33</accession>
<comment type="function">
    <text evidence="4">May act as a GTPase-activating protein for Rab family protein(s).</text>
</comment>
<reference key="1">
    <citation type="submission" date="2006-10" db="EMBL/GenBank/DDBJ databases">
        <authorList>
            <consortium name="Sanger Xenopus tropicalis EST/cDNA project"/>
        </authorList>
    </citation>
    <scope>NUCLEOTIDE SEQUENCE [LARGE SCALE MRNA]</scope>
    <source>
        <tissue>Egg</tissue>
    </source>
</reference>
<proteinExistence type="evidence at transcript level"/>
<protein>
    <recommendedName>
        <fullName>TBC1 domain family member 30</fullName>
    </recommendedName>
</protein>